<proteinExistence type="evidence at protein level"/>
<gene>
    <name evidence="9" type="primary">soxA2</name>
    <name type="ordered locus">HTH_1518</name>
    <name type="ordered locus">Hydth_1506</name>
</gene>
<accession>D3DJG5</accession>
<reference evidence="9" key="1">
    <citation type="journal article" date="2010" name="J. Bacteriol.">
        <title>Complete genome sequence of the thermophilic, obligately chemolithoautotrophic hydrogen-oxidizing bacterium Hydrogenobacter thermophilus TK-6.</title>
        <authorList>
            <person name="Arai H."/>
            <person name="Kanbe H."/>
            <person name="Ishii M."/>
            <person name="Igarashi Y."/>
        </authorList>
    </citation>
    <scope>NUCLEOTIDE SEQUENCE [LARGE SCALE GENOMIC DNA]</scope>
    <source>
        <strain>DSM 6534 / IAM 12695 / TK-6</strain>
    </source>
</reference>
<reference key="2">
    <citation type="journal article" date="2011" name="Stand. Genomic Sci.">
        <title>Complete genome sequence of Hydrogenobacter thermophilus type strain (TK-6).</title>
        <authorList>
            <consortium name="US DOE Joint Genome Institute (JGI-PGF)"/>
            <person name="Zeytun A."/>
            <person name="Sikorski J."/>
            <person name="Nolan M."/>
            <person name="Lapidus A."/>
            <person name="Lucas S."/>
            <person name="Han J."/>
            <person name="Tice H."/>
            <person name="Cheng J.F."/>
            <person name="Tapia R."/>
            <person name="Goodwin L."/>
            <person name="Pitluck S."/>
            <person name="Liolios K."/>
            <person name="Ivanova N."/>
            <person name="Mavromatis K."/>
            <person name="Mikhailova N."/>
            <person name="Ovchinnikova G."/>
            <person name="Pati A."/>
            <person name="Chen A."/>
            <person name="Palaniappan K."/>
            <person name="Ngatchou-Djao O.D."/>
            <person name="Land M."/>
            <person name="Hauser L."/>
            <person name="Jeffries C.D."/>
            <person name="Han C."/>
            <person name="Detter J.C."/>
            <person name="Ubler S."/>
            <person name="Rohde M."/>
            <person name="Tindall B.J."/>
            <person name="Goker M."/>
            <person name="Wirth R."/>
            <person name="Woyke T."/>
            <person name="Bristow J."/>
            <person name="Eisen J.A."/>
            <person name="Markowitz V."/>
            <person name="Hugenholtz P."/>
            <person name="Klenk H.P."/>
            <person name="Kyrpides N.C."/>
        </authorList>
    </citation>
    <scope>NUCLEOTIDE SEQUENCE [LARGE SCALE GENOMIC DNA]</scope>
    <source>
        <strain>DSM 6534 / IAM 12695 / TK-6</strain>
    </source>
</reference>
<reference evidence="7" key="3">
    <citation type="journal article" date="2010" name="Biosci. Biotechnol. Biochem.">
        <title>Thiosulfate oxidation by a thermo-neutrophilic hydrogen-oxidizing bacterium, Hydrogenobacter thermophilus.</title>
        <authorList>
            <person name="Sano R."/>
            <person name="Kameya M."/>
            <person name="Wakai S."/>
            <person name="Arai H."/>
            <person name="Igarashi Y."/>
            <person name="Ishii M."/>
            <person name="Sambongi Y."/>
        </authorList>
    </citation>
    <scope>PROBABLE FUNCTION</scope>
    <scope>CATALYTIC ACTIVITY</scope>
    <source>
        <strain evidence="5">DSM 6534 / IAM 12695 / TK-6</strain>
    </source>
</reference>
<feature type="signal peptide" evidence="3">
    <location>
        <begin position="1"/>
        <end position="23"/>
    </location>
</feature>
<feature type="chain" id="PRO_5000650632" description="L-cysteine S-thiosulfotransferase subunit SoxA">
    <location>
        <begin position="24"/>
        <end position="259"/>
    </location>
</feature>
<feature type="domain" description="Cytochrome c" evidence="4">
    <location>
        <begin position="50"/>
        <end position="135"/>
    </location>
</feature>
<feature type="active site" description="Cysteine persulfide intermediate" evidence="2">
    <location>
        <position position="220"/>
    </location>
</feature>
<feature type="binding site" description="covalent" evidence="2 4">
    <location>
        <position position="70"/>
    </location>
    <ligand>
        <name>heme c</name>
        <dbReference type="ChEBI" id="CHEBI:61717"/>
        <label>1</label>
    </ligand>
</feature>
<feature type="binding site" description="covalent" evidence="2 4">
    <location>
        <position position="73"/>
    </location>
    <ligand>
        <name>heme c</name>
        <dbReference type="ChEBI" id="CHEBI:61717"/>
        <label>1</label>
    </ligand>
</feature>
<feature type="binding site" description="axial binding residue" evidence="2 4">
    <location>
        <position position="74"/>
    </location>
    <ligand>
        <name>heme c</name>
        <dbReference type="ChEBI" id="CHEBI:61717"/>
        <label>1</label>
    </ligand>
    <ligandPart>
        <name>Fe</name>
        <dbReference type="ChEBI" id="CHEBI:18248"/>
    </ligandPart>
</feature>
<feature type="binding site" description="axial binding residue" evidence="2 4">
    <location>
        <position position="108"/>
    </location>
    <ligand>
        <name>heme c</name>
        <dbReference type="ChEBI" id="CHEBI:61717"/>
        <label>1</label>
    </ligand>
    <ligandPart>
        <name>Fe</name>
        <dbReference type="ChEBI" id="CHEBI:18248"/>
    </ligandPart>
</feature>
<feature type="binding site" description="covalent" evidence="2 4">
    <location>
        <position position="171"/>
    </location>
    <ligand>
        <name>heme c</name>
        <dbReference type="ChEBI" id="CHEBI:61717"/>
        <label>2</label>
    </ligand>
</feature>
<feature type="binding site" description="covalent" evidence="2 4">
    <location>
        <position position="174"/>
    </location>
    <ligand>
        <name>heme c</name>
        <dbReference type="ChEBI" id="CHEBI:61717"/>
        <label>2</label>
    </ligand>
</feature>
<feature type="binding site" description="axial binding residue" evidence="2 4">
    <location>
        <position position="175"/>
    </location>
    <ligand>
        <name>heme c</name>
        <dbReference type="ChEBI" id="CHEBI:61717"/>
        <label>2</label>
    </ligand>
    <ligandPart>
        <name>Fe</name>
        <dbReference type="ChEBI" id="CHEBI:18248"/>
    </ligandPart>
</feature>
<feature type="binding site" evidence="2">
    <location>
        <position position="216"/>
    </location>
    <ligand>
        <name>substrate</name>
    </ligand>
</feature>
<feature type="binding site" description="axial binding residue" evidence="2 4">
    <location>
        <position position="220"/>
    </location>
    <ligand>
        <name>heme c</name>
        <dbReference type="ChEBI" id="CHEBI:61717"/>
        <label>2</label>
    </ligand>
    <ligandPart>
        <name>Fe</name>
        <dbReference type="ChEBI" id="CHEBI:18248"/>
    </ligandPart>
</feature>
<organism>
    <name type="scientific">Hydrogenobacter thermophilus (strain DSM 6534 / IAM 12695 / TK-6)</name>
    <dbReference type="NCBI Taxonomy" id="608538"/>
    <lineage>
        <taxon>Bacteria</taxon>
        <taxon>Pseudomonadati</taxon>
        <taxon>Aquificota</taxon>
        <taxon>Aquificia</taxon>
        <taxon>Aquificales</taxon>
        <taxon>Aquificaceae</taxon>
        <taxon>Hydrogenobacter</taxon>
    </lineage>
</organism>
<evidence type="ECO:0000250" key="1">
    <source>
        <dbReference type="UniProtKB" id="O33434"/>
    </source>
</evidence>
<evidence type="ECO:0000250" key="2">
    <source>
        <dbReference type="UniProtKB" id="Q939U1"/>
    </source>
</evidence>
<evidence type="ECO:0000255" key="3"/>
<evidence type="ECO:0000255" key="4">
    <source>
        <dbReference type="PROSITE-ProRule" id="PRU00433"/>
    </source>
</evidence>
<evidence type="ECO:0000269" key="5">
    <source>
    </source>
</evidence>
<evidence type="ECO:0000303" key="6">
    <source>
    </source>
</evidence>
<evidence type="ECO:0000305" key="7"/>
<evidence type="ECO:0000312" key="8">
    <source>
        <dbReference type="EMBL" id="ADO45890.1"/>
    </source>
</evidence>
<evidence type="ECO:0000312" key="9">
    <source>
        <dbReference type="EMBL" id="BAI69967.1"/>
    </source>
</evidence>
<protein>
    <recommendedName>
        <fullName evidence="7">L-cysteine S-thiosulfotransferase subunit SoxA</fullName>
        <ecNumber evidence="5">2.8.5.2</ecNumber>
    </recommendedName>
    <alternativeName>
        <fullName evidence="1 9">Cytochrome c551 subunit diheme</fullName>
    </alternativeName>
    <alternativeName>
        <fullName evidence="6">Protein SoxA2</fullName>
    </alternativeName>
    <alternativeName>
        <fullName>SoxAX cytochrome complex subunit A2</fullName>
    </alternativeName>
    <alternativeName>
        <fullName evidence="6 8">Sulfur oxidizing protein A2</fullName>
    </alternativeName>
    <alternativeName>
        <fullName>Thiosulfate-oxidizing multienzyme system protein SoxA2</fullName>
        <shortName>TOMES protein SoxA2</shortName>
    </alternativeName>
</protein>
<sequence>MRKLWFLPILLGAVGGVSLYAIAQQENPAEEVKKQKELLLKEMGILPGDVYAEQGRDMFNKPMGNAGKSCSSCHGQDGRYLRGAYAHMPRYYKDMDAVADLDTRIKYCMEKYMGVGNVKHDLNFKSIATYVATLSNGMKMDVKLTHPKEREMYEKGRELWYARVGKMDFSCAICHDTFGGQRIRLQTLAKVKEDKVATHWPAYRFSNDQLWTMEDRIRGCYNQIRVTPPPHFSWPQIALSLYMAYESKGGTIETPGFVR</sequence>
<keyword id="KW-0249">Electron transport</keyword>
<keyword id="KW-0349">Heme</keyword>
<keyword id="KW-0408">Iron</keyword>
<keyword id="KW-0479">Metal-binding</keyword>
<keyword id="KW-0574">Periplasm</keyword>
<keyword id="KW-1185">Reference proteome</keyword>
<keyword id="KW-0732">Signal</keyword>
<keyword id="KW-0808">Transferase</keyword>
<keyword id="KW-0813">Transport</keyword>
<name>SOXA2_HYDTT</name>
<comment type="function">
    <text evidence="1 5">C-type diheme cytochrome, which is part of the SoxAX cytochrome complex involved in sulfur oxidation. The SoxAX complex catalyzes the formation of a heterodisulfide bond between the conserved cysteine residue on a sulfur carrier SoxYZ complex subunit SoxY and thiosulfate or other inorganic sulfur substrates. This leads to the liberation of two electrons, which may be transferred from the SoxAX complex to another cytochrome c that then channels them into the respiratory electron transport chain. Some electrons may be used for reductive CO(2) fixation.</text>
</comment>
<comment type="catalytic activity">
    <reaction evidence="5">
        <text>L-cysteinyl-[SoxY protein] + thiosulfate + 2 Fe(III)-[cytochrome c] = S-sulfosulfanyl-L-cysteinyl-[SoxY protein] + 2 Fe(II)-[cytochrome c] + 2 H(+)</text>
        <dbReference type="Rhea" id="RHEA:56720"/>
        <dbReference type="Rhea" id="RHEA-COMP:10350"/>
        <dbReference type="Rhea" id="RHEA-COMP:14328"/>
        <dbReference type="Rhea" id="RHEA-COMP:14399"/>
        <dbReference type="Rhea" id="RHEA-COMP:14691"/>
        <dbReference type="ChEBI" id="CHEBI:15378"/>
        <dbReference type="ChEBI" id="CHEBI:29033"/>
        <dbReference type="ChEBI" id="CHEBI:29034"/>
        <dbReference type="ChEBI" id="CHEBI:29950"/>
        <dbReference type="ChEBI" id="CHEBI:33542"/>
        <dbReference type="ChEBI" id="CHEBI:139321"/>
        <dbReference type="EC" id="2.8.5.2"/>
    </reaction>
</comment>
<comment type="catalytic activity">
    <reaction evidence="5">
        <text>S-sulfanyl-L-cysteinyl-[SoxY protein] + thiosulfate + 2 Fe(III)-[cytochrome c] = S-(2-sulfodisulfanyl)-L-cysteinyl-[SoxY protein] + 2 Fe(II)-[cytochrome c] + 2 H(+)</text>
        <dbReference type="Rhea" id="RHEA:51224"/>
        <dbReference type="Rhea" id="RHEA-COMP:10350"/>
        <dbReference type="Rhea" id="RHEA-COMP:14399"/>
        <dbReference type="Rhea" id="RHEA-COMP:14689"/>
        <dbReference type="Rhea" id="RHEA-COMP:14690"/>
        <dbReference type="ChEBI" id="CHEBI:15378"/>
        <dbReference type="ChEBI" id="CHEBI:29033"/>
        <dbReference type="ChEBI" id="CHEBI:29034"/>
        <dbReference type="ChEBI" id="CHEBI:33542"/>
        <dbReference type="ChEBI" id="CHEBI:61963"/>
        <dbReference type="ChEBI" id="CHEBI:140664"/>
        <dbReference type="EC" id="2.8.5.2"/>
    </reaction>
</comment>
<comment type="cofactor">
    <cofactor evidence="1">
        <name>heme c</name>
        <dbReference type="ChEBI" id="CHEBI:61717"/>
    </cofactor>
    <text evidence="1">Binds 2 heme c groups covalently per subunit.</text>
</comment>
<comment type="subunit">
    <text evidence="1">Heterodimer of SoxA and SoxX.</text>
</comment>
<comment type="subcellular location">
    <subcellularLocation>
        <location evidence="1">Periplasm</location>
    </subcellularLocation>
</comment>
<comment type="PTM">
    <text evidence="1">Cysteine persulfide at Cys-220.</text>
</comment>
<comment type="similarity">
    <text evidence="3">Belongs to the SoxA family.</text>
</comment>
<dbReference type="EC" id="2.8.5.2" evidence="5"/>
<dbReference type="EMBL" id="AP011112">
    <property type="protein sequence ID" value="BAI69967.1"/>
    <property type="molecule type" value="Genomic_DNA"/>
</dbReference>
<dbReference type="EMBL" id="CP002221">
    <property type="protein sequence ID" value="ADO45890.1"/>
    <property type="molecule type" value="Genomic_DNA"/>
</dbReference>
<dbReference type="RefSeq" id="WP_012964147.1">
    <property type="nucleotide sequence ID" value="NC_013799.1"/>
</dbReference>
<dbReference type="SMR" id="D3DJG5"/>
<dbReference type="STRING" id="608538.HTH_1518"/>
<dbReference type="KEGG" id="hte:Hydth_1506"/>
<dbReference type="KEGG" id="hth:HTH_1518"/>
<dbReference type="eggNOG" id="COG3258">
    <property type="taxonomic scope" value="Bacteria"/>
</dbReference>
<dbReference type="HOGENOM" id="CLU_079910_1_0_0"/>
<dbReference type="OrthoDB" id="9808312at2"/>
<dbReference type="Proteomes" id="UP000002574">
    <property type="component" value="Chromosome"/>
</dbReference>
<dbReference type="GO" id="GO:0070069">
    <property type="term" value="C:cytochrome complex"/>
    <property type="evidence" value="ECO:0007669"/>
    <property type="project" value="InterPro"/>
</dbReference>
<dbReference type="GO" id="GO:0042597">
    <property type="term" value="C:periplasmic space"/>
    <property type="evidence" value="ECO:0007669"/>
    <property type="project" value="UniProtKB-SubCell"/>
</dbReference>
<dbReference type="GO" id="GO:0009055">
    <property type="term" value="F:electron transfer activity"/>
    <property type="evidence" value="ECO:0000317"/>
    <property type="project" value="UniProtKB"/>
</dbReference>
<dbReference type="GO" id="GO:0020037">
    <property type="term" value="F:heme binding"/>
    <property type="evidence" value="ECO:0007669"/>
    <property type="project" value="InterPro"/>
</dbReference>
<dbReference type="GO" id="GO:0046872">
    <property type="term" value="F:metal ion binding"/>
    <property type="evidence" value="ECO:0007669"/>
    <property type="project" value="UniProtKB-KW"/>
</dbReference>
<dbReference type="GO" id="GO:0016491">
    <property type="term" value="F:oxidoreductase activity"/>
    <property type="evidence" value="ECO:0000317"/>
    <property type="project" value="UniProtKB"/>
</dbReference>
<dbReference type="GO" id="GO:0016669">
    <property type="term" value="F:oxidoreductase activity, acting on a sulfur group of donors, cytochrome as acceptor"/>
    <property type="evidence" value="ECO:0000317"/>
    <property type="project" value="UniProtKB"/>
</dbReference>
<dbReference type="GO" id="GO:0016740">
    <property type="term" value="F:transferase activity"/>
    <property type="evidence" value="ECO:0007669"/>
    <property type="project" value="UniProtKB-KW"/>
</dbReference>
<dbReference type="GO" id="GO:0019417">
    <property type="term" value="P:sulfur oxidation"/>
    <property type="evidence" value="ECO:0000317"/>
    <property type="project" value="UniProtKB"/>
</dbReference>
<dbReference type="FunFam" id="1.10.760.10:FF:000082">
    <property type="entry name" value="L-cysteine S-thiosulfotransferase subunit SoxA"/>
    <property type="match status" value="1"/>
</dbReference>
<dbReference type="Gene3D" id="1.10.760.10">
    <property type="entry name" value="Cytochrome c-like domain"/>
    <property type="match status" value="2"/>
</dbReference>
<dbReference type="InterPro" id="IPR009056">
    <property type="entry name" value="Cyt_c-like_dom"/>
</dbReference>
<dbReference type="InterPro" id="IPR036909">
    <property type="entry name" value="Cyt_c-like_dom_sf"/>
</dbReference>
<dbReference type="InterPro" id="IPR025710">
    <property type="entry name" value="SoxA"/>
</dbReference>
<dbReference type="NCBIfam" id="TIGR04484">
    <property type="entry name" value="thiosulf_SoxA"/>
    <property type="match status" value="1"/>
</dbReference>
<dbReference type="Pfam" id="PF21342">
    <property type="entry name" value="SoxA-TsdA_cyt-c"/>
    <property type="match status" value="1"/>
</dbReference>
<dbReference type="PIRSF" id="PIRSF038455">
    <property type="entry name" value="SoxA"/>
    <property type="match status" value="1"/>
</dbReference>
<dbReference type="SUPFAM" id="SSF46626">
    <property type="entry name" value="Cytochrome c"/>
    <property type="match status" value="2"/>
</dbReference>
<dbReference type="PROSITE" id="PS51007">
    <property type="entry name" value="CYTC"/>
    <property type="match status" value="1"/>
</dbReference>